<feature type="signal peptide" evidence="1">
    <location>
        <begin position="1"/>
        <end position="27"/>
    </location>
</feature>
<feature type="chain" id="PRO_5008172792" description="Monolignol oxidoreductase AtBBE-like 15">
    <location>
        <begin position="28"/>
        <end position="532"/>
    </location>
</feature>
<feature type="domain" description="FAD-binding PCMH-type" evidence="3">
    <location>
        <begin position="76"/>
        <end position="254"/>
    </location>
</feature>
<feature type="glycosylation site" description="N-linked (GlcNAc...) asparagine" evidence="2 6 13">
    <location>
        <position position="57"/>
    </location>
</feature>
<feature type="glycosylation site" description="N-linked (GlcNAc...) asparagine" evidence="2">
    <location>
        <position position="306"/>
    </location>
</feature>
<feature type="glycosylation site" description="N-linked (GlcNAc...) asparagine" evidence="2 6 13">
    <location>
        <position position="431"/>
    </location>
</feature>
<feature type="disulfide bond" evidence="6 13">
    <location>
        <begin position="36"/>
        <end position="100"/>
    </location>
</feature>
<feature type="cross-link" description="6-(S-cysteinyl)-8alpha-(pros-histidyl)-FAD (His-Cys)" evidence="6 13">
    <location>
        <begin position="115"/>
        <end position="179"/>
    </location>
</feature>
<feature type="helix" evidence="14">
    <location>
        <begin position="29"/>
        <end position="38"/>
    </location>
</feature>
<feature type="helix" evidence="14">
    <location>
        <begin position="48"/>
        <end position="50"/>
    </location>
</feature>
<feature type="helix" evidence="14">
    <location>
        <begin position="54"/>
        <end position="67"/>
    </location>
</feature>
<feature type="helix" evidence="14">
    <location>
        <begin position="72"/>
        <end position="74"/>
    </location>
</feature>
<feature type="strand" evidence="14">
    <location>
        <begin position="83"/>
        <end position="86"/>
    </location>
</feature>
<feature type="helix" evidence="14">
    <location>
        <begin position="91"/>
        <end position="103"/>
    </location>
</feature>
<feature type="strand" evidence="14">
    <location>
        <begin position="107"/>
        <end position="113"/>
    </location>
</feature>
<feature type="turn" evidence="14">
    <location>
        <begin position="120"/>
        <end position="122"/>
    </location>
</feature>
<feature type="strand" evidence="14">
    <location>
        <begin position="129"/>
        <end position="134"/>
    </location>
</feature>
<feature type="strand" evidence="14">
    <location>
        <begin position="141"/>
        <end position="144"/>
    </location>
</feature>
<feature type="helix" evidence="14">
    <location>
        <begin position="145"/>
        <end position="147"/>
    </location>
</feature>
<feature type="strand" evidence="14">
    <location>
        <begin position="149"/>
        <end position="153"/>
    </location>
</feature>
<feature type="helix" evidence="14">
    <location>
        <begin position="158"/>
        <end position="168"/>
    </location>
</feature>
<feature type="helix" evidence="14">
    <location>
        <begin position="184"/>
        <end position="187"/>
    </location>
</feature>
<feature type="helix" evidence="14">
    <location>
        <begin position="188"/>
        <end position="190"/>
    </location>
</feature>
<feature type="helix" evidence="14">
    <location>
        <begin position="197"/>
        <end position="200"/>
    </location>
</feature>
<feature type="helix" evidence="14">
    <location>
        <begin position="203"/>
        <end position="205"/>
    </location>
</feature>
<feature type="strand" evidence="14">
    <location>
        <begin position="206"/>
        <end position="213"/>
    </location>
</feature>
<feature type="strand" evidence="14">
    <location>
        <begin position="219"/>
        <end position="221"/>
    </location>
</feature>
<feature type="helix" evidence="14">
    <location>
        <begin position="222"/>
        <end position="232"/>
    </location>
</feature>
<feature type="turn" evidence="14">
    <location>
        <begin position="233"/>
        <end position="235"/>
    </location>
</feature>
<feature type="strand" evidence="14">
    <location>
        <begin position="243"/>
        <end position="250"/>
    </location>
</feature>
<feature type="strand" evidence="14">
    <location>
        <begin position="258"/>
        <end position="266"/>
    </location>
</feature>
<feature type="helix" evidence="14">
    <location>
        <begin position="267"/>
        <end position="269"/>
    </location>
</feature>
<feature type="helix" evidence="14">
    <location>
        <begin position="271"/>
        <end position="281"/>
    </location>
</feature>
<feature type="helix" evidence="14">
    <location>
        <begin position="282"/>
        <end position="284"/>
    </location>
</feature>
<feature type="strand" evidence="14">
    <location>
        <begin position="289"/>
        <end position="299"/>
    </location>
</feature>
<feature type="strand" evidence="14">
    <location>
        <begin position="307"/>
        <end position="319"/>
    </location>
</feature>
<feature type="helix" evidence="14">
    <location>
        <begin position="321"/>
        <end position="331"/>
    </location>
</feature>
<feature type="helix" evidence="14">
    <location>
        <begin position="333"/>
        <end position="335"/>
    </location>
</feature>
<feature type="helix" evidence="14">
    <location>
        <begin position="339"/>
        <end position="341"/>
    </location>
</feature>
<feature type="strand" evidence="14">
    <location>
        <begin position="343"/>
        <end position="345"/>
    </location>
</feature>
<feature type="helix" evidence="14">
    <location>
        <begin position="347"/>
        <end position="354"/>
    </location>
</feature>
<feature type="helix" evidence="14">
    <location>
        <begin position="363"/>
        <end position="368"/>
    </location>
</feature>
<feature type="strand" evidence="14">
    <location>
        <begin position="375"/>
        <end position="386"/>
    </location>
</feature>
<feature type="helix" evidence="14">
    <location>
        <begin position="390"/>
        <end position="400"/>
    </location>
</feature>
<feature type="strand" evidence="14">
    <location>
        <begin position="403"/>
        <end position="412"/>
    </location>
</feature>
<feature type="helix" evidence="14">
    <location>
        <begin position="415"/>
        <end position="418"/>
    </location>
</feature>
<feature type="strand" evidence="14">
    <location>
        <begin position="424"/>
        <end position="426"/>
    </location>
</feature>
<feature type="strand" evidence="14">
    <location>
        <begin position="435"/>
        <end position="445"/>
    </location>
</feature>
<feature type="helix" evidence="14">
    <location>
        <begin position="446"/>
        <end position="448"/>
    </location>
</feature>
<feature type="helix" evidence="14">
    <location>
        <begin position="450"/>
        <end position="464"/>
    </location>
</feature>
<feature type="helix" evidence="14">
    <location>
        <begin position="465"/>
        <end position="467"/>
    </location>
</feature>
<feature type="helix" evidence="14">
    <location>
        <begin position="482"/>
        <end position="484"/>
    </location>
</feature>
<feature type="strand" evidence="14">
    <location>
        <begin position="487"/>
        <end position="491"/>
    </location>
</feature>
<feature type="helix" evidence="14">
    <location>
        <begin position="493"/>
        <end position="501"/>
    </location>
</feature>
<feature type="helix" evidence="14">
    <location>
        <begin position="502"/>
        <end position="504"/>
    </location>
</feature>
<feature type="helix" evidence="14">
    <location>
        <begin position="505"/>
        <end position="515"/>
    </location>
</feature>
<sequence>MAFAISKRNATLFLVTLLLISVPLSSSTLQQDFVKCLVDNSDVSFPITASFFSPDQNATLFKEELESTAQNLRYLTPSNPKPVFIFEPLYETHVQAAVVCAKKLQLHLRLRSGGHDYEGLSFVAEDETPFVIVDLSKLRQVDVDLDSNSAWAHAGATIGEVYYRIQEKSQTHGFPAGLCSSLGIGGHLVGGAYGSMMRKFGLGADNVLDARIVDANGQILDRAAMGEDVFWAIRGGGGGSFGVILAWKIKLVPVPATVTVFTVTKTLEQDGTKVLYKWEQIADKLDDDLFIRVIISPASKTTKPGNRTISMSYQAQFLGDSNRLLQVMQKSFPELGLTKKDCTEMSWIKSVMYIAGFPNSAAPEALLAGKSLFKNHFKAKSDFVKEPIPVEGLEGLWERFLEEDSPLTIWNPYGGMMSRISESEIPFPHRNGTLFKIQWLSTWQDGKVSEERHMKWIREMYSYMEQYVSKNPRQAYVNYRDLDLGTNEGETDAREWGAKYYKGNFERLVKIKGEFDPDNFFRHEQSVPTKIG</sequence>
<gene>
    <name evidence="7" type="primary">MEE23</name>
    <name evidence="7" type="synonym">EDA28</name>
    <name evidence="11" type="ordered locus">At2g34790</name>
    <name evidence="12" type="ORF">F19I3.2</name>
</gene>
<proteinExistence type="evidence at protein level"/>
<evidence type="ECO:0000255" key="1"/>
<evidence type="ECO:0000255" key="2">
    <source>
        <dbReference type="PROSITE-ProRule" id="PRU00498"/>
    </source>
</evidence>
<evidence type="ECO:0000255" key="3">
    <source>
        <dbReference type="PROSITE-ProRule" id="PRU00718"/>
    </source>
</evidence>
<evidence type="ECO:0000269" key="4">
    <source>
    </source>
</evidence>
<evidence type="ECO:0000269" key="5">
    <source>
    </source>
</evidence>
<evidence type="ECO:0000269" key="6">
    <source>
    </source>
</evidence>
<evidence type="ECO:0000303" key="7">
    <source>
    </source>
</evidence>
<evidence type="ECO:0000303" key="8">
    <source>
    </source>
</evidence>
<evidence type="ECO:0000305" key="9"/>
<evidence type="ECO:0000305" key="10">
    <source>
    </source>
</evidence>
<evidence type="ECO:0000312" key="11">
    <source>
        <dbReference type="Araport" id="AT2G34790"/>
    </source>
</evidence>
<evidence type="ECO:0000312" key="12">
    <source>
        <dbReference type="EMBL" id="AAC12819.1"/>
    </source>
</evidence>
<evidence type="ECO:0007744" key="13">
    <source>
        <dbReference type="PDB" id="4UD8"/>
    </source>
</evidence>
<evidence type="ECO:0007829" key="14">
    <source>
        <dbReference type="PDB" id="4UD8"/>
    </source>
</evidence>
<keyword id="KW-0002">3D-structure</keyword>
<keyword id="KW-0134">Cell wall</keyword>
<keyword id="KW-1015">Disulfide bond</keyword>
<keyword id="KW-0274">FAD</keyword>
<keyword id="KW-0285">Flavoprotein</keyword>
<keyword id="KW-0325">Glycoprotein</keyword>
<keyword id="KW-0521">NADP</keyword>
<keyword id="KW-0547">Nucleotide-binding</keyword>
<keyword id="KW-0560">Oxidoreductase</keyword>
<keyword id="KW-1185">Reference proteome</keyword>
<keyword id="KW-0964">Secreted</keyword>
<keyword id="KW-0732">Signal</keyword>
<organism>
    <name type="scientific">Arabidopsis thaliana</name>
    <name type="common">Mouse-ear cress</name>
    <dbReference type="NCBI Taxonomy" id="3702"/>
    <lineage>
        <taxon>Eukaryota</taxon>
        <taxon>Viridiplantae</taxon>
        <taxon>Streptophyta</taxon>
        <taxon>Embryophyta</taxon>
        <taxon>Tracheophyta</taxon>
        <taxon>Spermatophyta</taxon>
        <taxon>Magnoliopsida</taxon>
        <taxon>eudicotyledons</taxon>
        <taxon>Gunneridae</taxon>
        <taxon>Pentapetalae</taxon>
        <taxon>rosids</taxon>
        <taxon>malvids</taxon>
        <taxon>Brassicales</taxon>
        <taxon>Brassicaceae</taxon>
        <taxon>Camelineae</taxon>
        <taxon>Arabidopsis</taxon>
    </lineage>
</organism>
<protein>
    <recommendedName>
        <fullName evidence="8">Monolignol oxidoreductase AtBBE-like 15</fullName>
        <ecNumber evidence="6">1.1.99.-</ecNumber>
    </recommendedName>
    <alternativeName>
        <fullName evidence="8">Berberine bridge enzyme-like 15</fullName>
        <shortName evidence="8">AtBBE-like 15</shortName>
    </alternativeName>
    <alternativeName>
        <fullName evidence="7">Protein EMBRYO SAC DEVELOPMENT ARREST 28</fullName>
    </alternativeName>
    <alternativeName>
        <fullName evidence="7">Protein MATERNAL EFFECT EMBRYO ARREST 23</fullName>
    </alternativeName>
</protein>
<name>BBE15_ARATH</name>
<dbReference type="EC" id="1.1.99.-" evidence="6"/>
<dbReference type="EMBL" id="AC004238">
    <property type="protein sequence ID" value="AAC12819.1"/>
    <property type="molecule type" value="Genomic_DNA"/>
</dbReference>
<dbReference type="EMBL" id="CP002685">
    <property type="protein sequence ID" value="AEC09022.1"/>
    <property type="molecule type" value="Genomic_DNA"/>
</dbReference>
<dbReference type="EMBL" id="BT004022">
    <property type="protein sequence ID" value="AAO42058.1"/>
    <property type="molecule type" value="mRNA"/>
</dbReference>
<dbReference type="EMBL" id="BT005187">
    <property type="protein sequence ID" value="AAO50720.1"/>
    <property type="molecule type" value="mRNA"/>
</dbReference>
<dbReference type="PIR" id="T00461">
    <property type="entry name" value="T00461"/>
</dbReference>
<dbReference type="RefSeq" id="NP_181025.1">
    <property type="nucleotide sequence ID" value="NM_129032.5"/>
</dbReference>
<dbReference type="PDB" id="4UD8">
    <property type="method" value="X-ray"/>
    <property type="resolution" value="2.09 A"/>
    <property type="chains" value="A/B=1-532"/>
</dbReference>
<dbReference type="PDBsum" id="4UD8"/>
<dbReference type="SMR" id="O64743"/>
<dbReference type="FunCoup" id="O64743">
    <property type="interactions" value="137"/>
</dbReference>
<dbReference type="STRING" id="3702.O64743"/>
<dbReference type="GlyCosmos" id="O64743">
    <property type="glycosylation" value="3 sites, No reported glycans"/>
</dbReference>
<dbReference type="GlyGen" id="O64743">
    <property type="glycosylation" value="3 sites"/>
</dbReference>
<dbReference type="iPTMnet" id="O64743"/>
<dbReference type="PaxDb" id="3702-AT2G34790.1"/>
<dbReference type="ProteomicsDB" id="240637"/>
<dbReference type="EnsemblPlants" id="AT2G34790.1">
    <property type="protein sequence ID" value="AT2G34790.1"/>
    <property type="gene ID" value="AT2G34790"/>
</dbReference>
<dbReference type="GeneID" id="818044"/>
<dbReference type="Gramene" id="AT2G34790.1">
    <property type="protein sequence ID" value="AT2G34790.1"/>
    <property type="gene ID" value="AT2G34790"/>
</dbReference>
<dbReference type="KEGG" id="ath:AT2G34790"/>
<dbReference type="Araport" id="AT2G34790"/>
<dbReference type="TAIR" id="AT2G34790">
    <property type="gene designation" value="MEE23"/>
</dbReference>
<dbReference type="eggNOG" id="ENOG502QQWK">
    <property type="taxonomic scope" value="Eukaryota"/>
</dbReference>
<dbReference type="HOGENOM" id="CLU_018354_6_0_1"/>
<dbReference type="InParanoid" id="O64743"/>
<dbReference type="OMA" id="ASEEKHM"/>
<dbReference type="PhylomeDB" id="O64743"/>
<dbReference type="BioCyc" id="ARA:AT2G34790-MONOMER"/>
<dbReference type="BRENDA" id="1.21.3.3">
    <property type="organism ID" value="399"/>
</dbReference>
<dbReference type="EvolutionaryTrace" id="O64743"/>
<dbReference type="PRO" id="PR:O64743"/>
<dbReference type="Proteomes" id="UP000006548">
    <property type="component" value="Chromosome 2"/>
</dbReference>
<dbReference type="ExpressionAtlas" id="O64743">
    <property type="expression patterns" value="baseline and differential"/>
</dbReference>
<dbReference type="GO" id="GO:0005576">
    <property type="term" value="C:extracellular region"/>
    <property type="evidence" value="ECO:0007669"/>
    <property type="project" value="UniProtKB-KW"/>
</dbReference>
<dbReference type="GO" id="GO:0009505">
    <property type="term" value="C:plant-type cell wall"/>
    <property type="evidence" value="ECO:0000314"/>
    <property type="project" value="UniProtKB"/>
</dbReference>
<dbReference type="GO" id="GO:0009506">
    <property type="term" value="C:plasmodesma"/>
    <property type="evidence" value="ECO:0007005"/>
    <property type="project" value="TAIR"/>
</dbReference>
<dbReference type="GO" id="GO:0045551">
    <property type="term" value="F:cinnamyl-alcohol dehydrogenase activity"/>
    <property type="evidence" value="ECO:0000314"/>
    <property type="project" value="TAIR"/>
</dbReference>
<dbReference type="GO" id="GO:0050268">
    <property type="term" value="F:coniferyl-alcohol dehydrogenase activity"/>
    <property type="evidence" value="ECO:0000314"/>
    <property type="project" value="UniProtKB"/>
</dbReference>
<dbReference type="GO" id="GO:0071949">
    <property type="term" value="F:FAD binding"/>
    <property type="evidence" value="ECO:0007669"/>
    <property type="project" value="InterPro"/>
</dbReference>
<dbReference type="GO" id="GO:0009793">
    <property type="term" value="P:embryo development ending in seed dormancy"/>
    <property type="evidence" value="ECO:0000315"/>
    <property type="project" value="TAIR"/>
</dbReference>
<dbReference type="GO" id="GO:0010197">
    <property type="term" value="P:polar nucleus fusion"/>
    <property type="evidence" value="ECO:0000315"/>
    <property type="project" value="TAIR"/>
</dbReference>
<dbReference type="FunFam" id="3.30.43.10:FF:000004">
    <property type="entry name" value="Berberine bridge enzyme-like 15"/>
    <property type="match status" value="1"/>
</dbReference>
<dbReference type="Gene3D" id="3.30.465.10">
    <property type="match status" value="1"/>
</dbReference>
<dbReference type="Gene3D" id="3.40.462.20">
    <property type="match status" value="1"/>
</dbReference>
<dbReference type="Gene3D" id="3.30.43.10">
    <property type="entry name" value="Uridine Diphospho-n-acetylenolpyruvylglucosamine Reductase, domain 2"/>
    <property type="match status" value="1"/>
</dbReference>
<dbReference type="InterPro" id="IPR012951">
    <property type="entry name" value="BBE"/>
</dbReference>
<dbReference type="InterPro" id="IPR016166">
    <property type="entry name" value="FAD-bd_PCMH"/>
</dbReference>
<dbReference type="InterPro" id="IPR036318">
    <property type="entry name" value="FAD-bd_PCMH-like_sf"/>
</dbReference>
<dbReference type="InterPro" id="IPR016167">
    <property type="entry name" value="FAD-bd_PCMH_sub1"/>
</dbReference>
<dbReference type="InterPro" id="IPR016169">
    <property type="entry name" value="FAD-bd_PCMH_sub2"/>
</dbReference>
<dbReference type="InterPro" id="IPR006094">
    <property type="entry name" value="Oxid_FAD_bind_N"/>
</dbReference>
<dbReference type="PANTHER" id="PTHR32448">
    <property type="entry name" value="OS08G0158400 PROTEIN"/>
    <property type="match status" value="1"/>
</dbReference>
<dbReference type="Pfam" id="PF08031">
    <property type="entry name" value="BBE"/>
    <property type="match status" value="1"/>
</dbReference>
<dbReference type="Pfam" id="PF01565">
    <property type="entry name" value="FAD_binding_4"/>
    <property type="match status" value="1"/>
</dbReference>
<dbReference type="SUPFAM" id="SSF56176">
    <property type="entry name" value="FAD-binding/transporter-associated domain-like"/>
    <property type="match status" value="1"/>
</dbReference>
<dbReference type="PROSITE" id="PS51387">
    <property type="entry name" value="FAD_PCMH"/>
    <property type="match status" value="1"/>
</dbReference>
<reference key="1">
    <citation type="journal article" date="1999" name="Nature">
        <title>Sequence and analysis of chromosome 2 of the plant Arabidopsis thaliana.</title>
        <authorList>
            <person name="Lin X."/>
            <person name="Kaul S."/>
            <person name="Rounsley S.D."/>
            <person name="Shea T.P."/>
            <person name="Benito M.-I."/>
            <person name="Town C.D."/>
            <person name="Fujii C.Y."/>
            <person name="Mason T.M."/>
            <person name="Bowman C.L."/>
            <person name="Barnstead M.E."/>
            <person name="Feldblyum T.V."/>
            <person name="Buell C.R."/>
            <person name="Ketchum K.A."/>
            <person name="Lee J.J."/>
            <person name="Ronning C.M."/>
            <person name="Koo H.L."/>
            <person name="Moffat K.S."/>
            <person name="Cronin L.A."/>
            <person name="Shen M."/>
            <person name="Pai G."/>
            <person name="Van Aken S."/>
            <person name="Umayam L."/>
            <person name="Tallon L.J."/>
            <person name="Gill J.E."/>
            <person name="Adams M.D."/>
            <person name="Carrera A.J."/>
            <person name="Creasy T.H."/>
            <person name="Goodman H.M."/>
            <person name="Somerville C.R."/>
            <person name="Copenhaver G.P."/>
            <person name="Preuss D."/>
            <person name="Nierman W.C."/>
            <person name="White O."/>
            <person name="Eisen J.A."/>
            <person name="Salzberg S.L."/>
            <person name="Fraser C.M."/>
            <person name="Venter J.C."/>
        </authorList>
    </citation>
    <scope>NUCLEOTIDE SEQUENCE [LARGE SCALE GENOMIC DNA]</scope>
    <source>
        <strain>cv. Columbia</strain>
    </source>
</reference>
<reference key="2">
    <citation type="journal article" date="2017" name="Plant J.">
        <title>Araport11: a complete reannotation of the Arabidopsis thaliana reference genome.</title>
        <authorList>
            <person name="Cheng C.Y."/>
            <person name="Krishnakumar V."/>
            <person name="Chan A.P."/>
            <person name="Thibaud-Nissen F."/>
            <person name="Schobel S."/>
            <person name="Town C.D."/>
        </authorList>
    </citation>
    <scope>GENOME REANNOTATION</scope>
    <source>
        <strain>cv. Columbia</strain>
    </source>
</reference>
<reference key="3">
    <citation type="journal article" date="2003" name="Science">
        <title>Empirical analysis of transcriptional activity in the Arabidopsis genome.</title>
        <authorList>
            <person name="Yamada K."/>
            <person name="Lim J."/>
            <person name="Dale J.M."/>
            <person name="Chen H."/>
            <person name="Shinn P."/>
            <person name="Palm C.J."/>
            <person name="Southwick A.M."/>
            <person name="Wu H.C."/>
            <person name="Kim C.J."/>
            <person name="Nguyen M."/>
            <person name="Pham P.K."/>
            <person name="Cheuk R.F."/>
            <person name="Karlin-Newmann G."/>
            <person name="Liu S.X."/>
            <person name="Lam B."/>
            <person name="Sakano H."/>
            <person name="Wu T."/>
            <person name="Yu G."/>
            <person name="Miranda M."/>
            <person name="Quach H.L."/>
            <person name="Tripp M."/>
            <person name="Chang C.H."/>
            <person name="Lee J.M."/>
            <person name="Toriumi M.J."/>
            <person name="Chan M.M."/>
            <person name="Tang C.C."/>
            <person name="Onodera C.S."/>
            <person name="Deng J.M."/>
            <person name="Akiyama K."/>
            <person name="Ansari Y."/>
            <person name="Arakawa T."/>
            <person name="Banh J."/>
            <person name="Banno F."/>
            <person name="Bowser L."/>
            <person name="Brooks S.Y."/>
            <person name="Carninci P."/>
            <person name="Chao Q."/>
            <person name="Choy N."/>
            <person name="Enju A."/>
            <person name="Goldsmith A.D."/>
            <person name="Gurjal M."/>
            <person name="Hansen N.F."/>
            <person name="Hayashizaki Y."/>
            <person name="Johnson-Hopson C."/>
            <person name="Hsuan V.W."/>
            <person name="Iida K."/>
            <person name="Karnes M."/>
            <person name="Khan S."/>
            <person name="Koesema E."/>
            <person name="Ishida J."/>
            <person name="Jiang P.X."/>
            <person name="Jones T."/>
            <person name="Kawai J."/>
            <person name="Kamiya A."/>
            <person name="Meyers C."/>
            <person name="Nakajima M."/>
            <person name="Narusaka M."/>
            <person name="Seki M."/>
            <person name="Sakurai T."/>
            <person name="Satou M."/>
            <person name="Tamse R."/>
            <person name="Vaysberg M."/>
            <person name="Wallender E.K."/>
            <person name="Wong C."/>
            <person name="Yamamura Y."/>
            <person name="Yuan S."/>
            <person name="Shinozaki K."/>
            <person name="Davis R.W."/>
            <person name="Theologis A."/>
            <person name="Ecker J.R."/>
        </authorList>
    </citation>
    <scope>NUCLEOTIDE SEQUENCE [LARGE SCALE MRNA]</scope>
    <source>
        <strain>cv. Columbia</strain>
    </source>
</reference>
<reference key="4">
    <citation type="journal article" date="2005" name="Development">
        <title>Genetic and molecular identification of genes required for female gametophyte development and function in Arabidopsis.</title>
        <authorList>
            <person name="Pagnussat G.C."/>
            <person name="Yu H.-J."/>
            <person name="Ngo Q.A."/>
            <person name="Rajani S."/>
            <person name="Mayalagu S."/>
            <person name="Johnson C.S."/>
            <person name="Capron A."/>
            <person name="Xie L.-F."/>
            <person name="Ye D."/>
            <person name="Sundaresan V."/>
        </authorList>
    </citation>
    <scope>FUNCTION</scope>
    <scope>DISRUPTION PHENOTYPE</scope>
</reference>
<reference key="5">
    <citation type="journal article" date="2009" name="PLoS Genet.">
        <title>Gibberellin acts through jasmonate to control the expression of MYB21, MYB24, and MYB57 to promote stamen filament growth in Arabidopsis.</title>
        <authorList>
            <person name="Cheng H."/>
            <person name="Song S."/>
            <person name="Xiao L."/>
            <person name="Soo H.M."/>
            <person name="Cheng Z."/>
            <person name="Xie D."/>
            <person name="Peng J."/>
        </authorList>
    </citation>
    <scope>TISSUE SPECIFICITY</scope>
</reference>
<reference key="6">
    <citation type="journal article" date="2015" name="J. Biol. Chem.">
        <title>Oxidation of monolignols by members of the berberine bridge enzyme family suggests a role in plant cell wall metabolism.</title>
        <authorList>
            <person name="Daniel B."/>
            <person name="Pavkov-Keller T."/>
            <person name="Steiner B."/>
            <person name="Dordic A."/>
            <person name="Gutmann A."/>
            <person name="Nidetzky B."/>
            <person name="Sensen C.W."/>
            <person name="van der Graaff E."/>
            <person name="Wallner S."/>
            <person name="Gruber K."/>
            <person name="Macheroux P."/>
        </authorList>
    </citation>
    <scope>X-RAY CRYSTALLOGRAPHY (2.09 ANGSTROMS) IN COMPLEX WITH FAD</scope>
    <scope>GLYCOSYLATION AT ASN-57 AND ASN-431</scope>
    <scope>FUNCTION</scope>
    <scope>CATALYTIC ACTIVITY</scope>
    <scope>SUBSTRATE SPECIFICITY</scope>
    <scope>DISULFIDE BONDS</scope>
    <scope>SUBCELLULAR LOCATION</scope>
    <scope>COFACTOR</scope>
    <scope>GENE FAMILY</scope>
    <scope>NOMENCLATURE</scope>
</reference>
<comment type="function">
    <text evidence="4 6">Required for endosperm development and polar nuclei fusion (PubMed:15634699). Mediates oxidation of p-hydroxylated derivatives of cinnamyl alcohol (i.e. the monolignols p-coumaryl-, coniferyl-, and sinapyl alcohol) to their corresponding aldehydes. Can also use the beta-O-glycosylated form of coniferyl alcohol (coniferin) as substrate, but is much less efficient towards cinnamyl alcohol. The electron acceptor required for these reactions is not known, but does not seem to be dioxygen (PubMed:26037923).</text>
</comment>
<comment type="catalytic activity">
    <reaction evidence="6">
        <text>(E)-4-coumaroyl alcohol + A = (E)-4-coumaraldehyde + AH2</text>
        <dbReference type="Rhea" id="RHEA:76451"/>
        <dbReference type="ChEBI" id="CHEBI:13193"/>
        <dbReference type="ChEBI" id="CHEBI:17499"/>
        <dbReference type="ChEBI" id="CHEBI:28353"/>
        <dbReference type="ChEBI" id="CHEBI:64555"/>
    </reaction>
    <physiologicalReaction direction="left-to-right" evidence="10">
        <dbReference type="Rhea" id="RHEA:76452"/>
    </physiologicalReaction>
</comment>
<comment type="catalytic activity">
    <reaction evidence="6">
        <text>(E)-coniferol + A = (E)-coniferaldehyde + AH2</text>
        <dbReference type="Rhea" id="RHEA:76455"/>
        <dbReference type="ChEBI" id="CHEBI:13193"/>
        <dbReference type="ChEBI" id="CHEBI:16547"/>
        <dbReference type="ChEBI" id="CHEBI:17499"/>
        <dbReference type="ChEBI" id="CHEBI:17745"/>
    </reaction>
    <physiologicalReaction direction="left-to-right" evidence="10">
        <dbReference type="Rhea" id="RHEA:76456"/>
    </physiologicalReaction>
</comment>
<comment type="catalytic activity">
    <reaction evidence="6">
        <text>(E)-sinapyl alcohol + A = (E)-sinapaldehyde + AH2</text>
        <dbReference type="Rhea" id="RHEA:76459"/>
        <dbReference type="ChEBI" id="CHEBI:13193"/>
        <dbReference type="ChEBI" id="CHEBI:17499"/>
        <dbReference type="ChEBI" id="CHEBI:27949"/>
        <dbReference type="ChEBI" id="CHEBI:64557"/>
    </reaction>
    <physiologicalReaction direction="left-to-right" evidence="10">
        <dbReference type="Rhea" id="RHEA:76460"/>
    </physiologicalReaction>
</comment>
<comment type="catalytic activity">
    <reaction evidence="6">
        <text>4-O-(beta-D-glucosyl)-(E)-coniferol + A = 4-O-(beta-D-glucosyl)-4-(E)-coniferyl aldehyde + AH2</text>
        <dbReference type="Rhea" id="RHEA:76463"/>
        <dbReference type="ChEBI" id="CHEBI:13193"/>
        <dbReference type="ChEBI" id="CHEBI:16220"/>
        <dbReference type="ChEBI" id="CHEBI:17499"/>
        <dbReference type="ChEBI" id="CHEBI:136949"/>
    </reaction>
    <physiologicalReaction direction="left-to-right" evidence="10">
        <dbReference type="Rhea" id="RHEA:76464"/>
    </physiologicalReaction>
</comment>
<comment type="cofactor">
    <cofactor evidence="6">
        <name>FAD</name>
        <dbReference type="ChEBI" id="CHEBI:57692"/>
    </cofactor>
    <text evidence="6">Binds 1 FAD per subunit in a bicovalent manner.</text>
</comment>
<comment type="subcellular location">
    <subcellularLocation>
        <location evidence="8">Secreted</location>
        <location evidence="8">Cell wall</location>
    </subcellularLocation>
</comment>
<comment type="tissue specificity">
    <text evidence="5">Expressed in sepals and stamen.</text>
</comment>
<comment type="PTM">
    <text evidence="6">The FAD cofactor is bound via a bicovalent 6-S-cysteinyl, 8alpha-N1-histidyl FAD linkage.</text>
</comment>
<comment type="disruption phenotype">
    <text evidence="4">Endosperm development arrest and impaired polar nuclei fusion.</text>
</comment>
<comment type="similarity">
    <text evidence="9">Belongs to the oxygen-dependent FAD-linked oxidoreductase family.</text>
</comment>
<accession>O64743</accession>